<reference key="1">
    <citation type="journal article" date="2007" name="PLoS ONE">
        <title>Molecular correlates of host specialization in Staphylococcus aureus.</title>
        <authorList>
            <person name="Herron-Olson L."/>
            <person name="Fitzgerald J.R."/>
            <person name="Musser J.M."/>
            <person name="Kapur V."/>
        </authorList>
    </citation>
    <scope>NUCLEOTIDE SEQUENCE [LARGE SCALE GENOMIC DNA]</scope>
    <source>
        <strain>bovine RF122 / ET3-1</strain>
    </source>
</reference>
<protein>
    <recommendedName>
        <fullName evidence="1">CCA-adding enzyme</fullName>
        <ecNumber evidence="1">2.7.7.72</ecNumber>
    </recommendedName>
    <alternativeName>
        <fullName evidence="1">CCA tRNA nucleotidyltransferase</fullName>
    </alternativeName>
    <alternativeName>
        <fullName evidence="1">tRNA CCA-pyrophosphorylase</fullName>
    </alternativeName>
    <alternativeName>
        <fullName evidence="1">tRNA adenylyl-/cytidylyl- transferase</fullName>
    </alternativeName>
    <alternativeName>
        <fullName evidence="1">tRNA nucleotidyltransferase</fullName>
    </alternativeName>
    <alternativeName>
        <fullName evidence="1">tRNA-NT</fullName>
    </alternativeName>
</protein>
<sequence>MDKSLFEQARPILEQIQDNGFEAYYVGGSVRDYVMGRNIHDIDITTSATPDEIESIFSHTIPVGKEHGTINVVFNNENYEVTTFRAEEDYVDHRRPSGVTFVRDLYEDLQRRDFTMNAIAMDTAYKLYDYFDGQQDINNRIIRTVGIAAERFQEDALRMIRCLRFQSQLSFEIATETFEAMRTQMADIKFLSIERIVIELTKLMRGINVEKSFNHLKSLKAFNYMPYFEHLDMNQINVTEPIDLELLIAIVSVKFDINYSLKPLKLSNRQVKDINQYIQIMNALPSIFTKEQLKIFVYDYDTNLIKNIMVAADVLKANDIQGHEPLIVNLQTIDETLHHLPMHNRKDMMVNGGVLMAHLNAKSGPWLKDVLRQIEIAIVTGKVSNEETEILKWVDNHVKI</sequence>
<keyword id="KW-0067">ATP-binding</keyword>
<keyword id="KW-0460">Magnesium</keyword>
<keyword id="KW-0479">Metal-binding</keyword>
<keyword id="KW-0547">Nucleotide-binding</keyword>
<keyword id="KW-0548">Nucleotidyltransferase</keyword>
<keyword id="KW-0692">RNA repair</keyword>
<keyword id="KW-0694">RNA-binding</keyword>
<keyword id="KW-0808">Transferase</keyword>
<keyword id="KW-0819">tRNA processing</keyword>
<proteinExistence type="inferred from homology"/>
<organism>
    <name type="scientific">Staphylococcus aureus (strain bovine RF122 / ET3-1)</name>
    <dbReference type="NCBI Taxonomy" id="273036"/>
    <lineage>
        <taxon>Bacteria</taxon>
        <taxon>Bacillati</taxon>
        <taxon>Bacillota</taxon>
        <taxon>Bacilli</taxon>
        <taxon>Bacillales</taxon>
        <taxon>Staphylococcaceae</taxon>
        <taxon>Staphylococcus</taxon>
    </lineage>
</organism>
<gene>
    <name evidence="1" type="primary">cca</name>
    <name type="ordered locus">SAB1321c</name>
</gene>
<name>CCA_STAAB</name>
<accession>Q2YY49</accession>
<dbReference type="EC" id="2.7.7.72" evidence="1"/>
<dbReference type="EMBL" id="AJ938182">
    <property type="protein sequence ID" value="CAI81010.1"/>
    <property type="molecule type" value="Genomic_DNA"/>
</dbReference>
<dbReference type="RefSeq" id="WP_000361551.1">
    <property type="nucleotide sequence ID" value="NC_007622.1"/>
</dbReference>
<dbReference type="SMR" id="Q2YY49"/>
<dbReference type="KEGG" id="sab:SAB1321c"/>
<dbReference type="HOGENOM" id="CLU_015961_3_0_9"/>
<dbReference type="GO" id="GO:0005524">
    <property type="term" value="F:ATP binding"/>
    <property type="evidence" value="ECO:0007669"/>
    <property type="project" value="UniProtKB-UniRule"/>
</dbReference>
<dbReference type="GO" id="GO:0004810">
    <property type="term" value="F:CCA tRNA nucleotidyltransferase activity"/>
    <property type="evidence" value="ECO:0007669"/>
    <property type="project" value="UniProtKB-UniRule"/>
</dbReference>
<dbReference type="GO" id="GO:0000287">
    <property type="term" value="F:magnesium ion binding"/>
    <property type="evidence" value="ECO:0007669"/>
    <property type="project" value="UniProtKB-UniRule"/>
</dbReference>
<dbReference type="GO" id="GO:0000049">
    <property type="term" value="F:tRNA binding"/>
    <property type="evidence" value="ECO:0007669"/>
    <property type="project" value="UniProtKB-UniRule"/>
</dbReference>
<dbReference type="GO" id="GO:0042245">
    <property type="term" value="P:RNA repair"/>
    <property type="evidence" value="ECO:0007669"/>
    <property type="project" value="UniProtKB-KW"/>
</dbReference>
<dbReference type="GO" id="GO:0001680">
    <property type="term" value="P:tRNA 3'-terminal CCA addition"/>
    <property type="evidence" value="ECO:0007669"/>
    <property type="project" value="UniProtKB-UniRule"/>
</dbReference>
<dbReference type="CDD" id="cd05398">
    <property type="entry name" value="NT_ClassII-CCAase"/>
    <property type="match status" value="1"/>
</dbReference>
<dbReference type="Gene3D" id="1.10.246.80">
    <property type="match status" value="1"/>
</dbReference>
<dbReference type="Gene3D" id="3.30.460.10">
    <property type="entry name" value="Beta Polymerase, domain 2"/>
    <property type="match status" value="1"/>
</dbReference>
<dbReference type="Gene3D" id="1.10.3090.10">
    <property type="entry name" value="cca-adding enzyme, domain 2"/>
    <property type="match status" value="1"/>
</dbReference>
<dbReference type="HAMAP" id="MF_01263">
    <property type="entry name" value="CCA_bact_type3"/>
    <property type="match status" value="1"/>
</dbReference>
<dbReference type="InterPro" id="IPR050264">
    <property type="entry name" value="Bact_CCA-adding_enz_type3_sf"/>
</dbReference>
<dbReference type="InterPro" id="IPR032810">
    <property type="entry name" value="CCA-adding_enz_C"/>
</dbReference>
<dbReference type="InterPro" id="IPR023068">
    <property type="entry name" value="CCA-adding_enz_firmicutes"/>
</dbReference>
<dbReference type="InterPro" id="IPR043519">
    <property type="entry name" value="NT_sf"/>
</dbReference>
<dbReference type="InterPro" id="IPR002646">
    <property type="entry name" value="PolA_pol_head_dom"/>
</dbReference>
<dbReference type="InterPro" id="IPR032828">
    <property type="entry name" value="PolyA_RNA-bd"/>
</dbReference>
<dbReference type="NCBIfam" id="NF009814">
    <property type="entry name" value="PRK13299.1"/>
    <property type="match status" value="1"/>
</dbReference>
<dbReference type="PANTHER" id="PTHR46173">
    <property type="entry name" value="CCA TRNA NUCLEOTIDYLTRANSFERASE 1, MITOCHONDRIAL"/>
    <property type="match status" value="1"/>
</dbReference>
<dbReference type="PANTHER" id="PTHR46173:SF1">
    <property type="entry name" value="CCA TRNA NUCLEOTIDYLTRANSFERASE 1, MITOCHONDRIAL"/>
    <property type="match status" value="1"/>
</dbReference>
<dbReference type="Pfam" id="PF01743">
    <property type="entry name" value="PolyA_pol"/>
    <property type="match status" value="1"/>
</dbReference>
<dbReference type="Pfam" id="PF12627">
    <property type="entry name" value="PolyA_pol_RNAbd"/>
    <property type="match status" value="1"/>
</dbReference>
<dbReference type="Pfam" id="PF13735">
    <property type="entry name" value="tRNA_NucTran2_2"/>
    <property type="match status" value="1"/>
</dbReference>
<dbReference type="SUPFAM" id="SSF81301">
    <property type="entry name" value="Nucleotidyltransferase"/>
    <property type="match status" value="1"/>
</dbReference>
<dbReference type="SUPFAM" id="SSF81891">
    <property type="entry name" value="Poly A polymerase C-terminal region-like"/>
    <property type="match status" value="1"/>
</dbReference>
<comment type="function">
    <text evidence="1">Catalyzes the addition and repair of the essential 3'-terminal CCA sequence in tRNAs without using a nucleic acid template. Adds these three nucleotides in the order of C, C, and A to the tRNA nucleotide-73, using CTP and ATP as substrates and producing inorganic pyrophosphate. tRNA 3'-terminal CCA addition is required both for tRNA processing and repair. Also involved in tRNA surveillance by mediating tandem CCA addition to generate a CCACCA at the 3' terminus of unstable tRNAs. While stable tRNAs receive only 3'-terminal CCA, unstable tRNAs are marked with CCACCA and rapidly degraded.</text>
</comment>
<comment type="catalytic activity">
    <reaction evidence="1">
        <text>a tRNA precursor + 2 CTP + ATP = a tRNA with a 3' CCA end + 3 diphosphate</text>
        <dbReference type="Rhea" id="RHEA:14433"/>
        <dbReference type="Rhea" id="RHEA-COMP:10465"/>
        <dbReference type="Rhea" id="RHEA-COMP:10468"/>
        <dbReference type="ChEBI" id="CHEBI:30616"/>
        <dbReference type="ChEBI" id="CHEBI:33019"/>
        <dbReference type="ChEBI" id="CHEBI:37563"/>
        <dbReference type="ChEBI" id="CHEBI:74896"/>
        <dbReference type="ChEBI" id="CHEBI:83071"/>
        <dbReference type="EC" id="2.7.7.72"/>
    </reaction>
</comment>
<comment type="catalytic activity">
    <reaction evidence="1">
        <text>a tRNA with a 3' CCA end + 2 CTP + ATP = a tRNA with a 3' CCACCA end + 3 diphosphate</text>
        <dbReference type="Rhea" id="RHEA:76235"/>
        <dbReference type="Rhea" id="RHEA-COMP:10468"/>
        <dbReference type="Rhea" id="RHEA-COMP:18655"/>
        <dbReference type="ChEBI" id="CHEBI:30616"/>
        <dbReference type="ChEBI" id="CHEBI:33019"/>
        <dbReference type="ChEBI" id="CHEBI:37563"/>
        <dbReference type="ChEBI" id="CHEBI:83071"/>
        <dbReference type="ChEBI" id="CHEBI:195187"/>
    </reaction>
    <physiologicalReaction direction="left-to-right" evidence="1">
        <dbReference type="Rhea" id="RHEA:76236"/>
    </physiologicalReaction>
</comment>
<comment type="cofactor">
    <cofactor evidence="1">
        <name>Mg(2+)</name>
        <dbReference type="ChEBI" id="CHEBI:18420"/>
    </cofactor>
</comment>
<comment type="subunit">
    <text evidence="1">Homodimer.</text>
</comment>
<comment type="miscellaneous">
    <text evidence="1">A single active site specifically recognizes both ATP and CTP and is responsible for their addition.</text>
</comment>
<comment type="similarity">
    <text evidence="1">Belongs to the tRNA nucleotidyltransferase/poly(A) polymerase family. Bacterial CCA-adding enzyme type 3 subfamily.</text>
</comment>
<feature type="chain" id="PRO_1000054334" description="CCA-adding enzyme">
    <location>
        <begin position="1"/>
        <end position="400"/>
    </location>
</feature>
<feature type="binding site" evidence="1">
    <location>
        <position position="28"/>
    </location>
    <ligand>
        <name>ATP</name>
        <dbReference type="ChEBI" id="CHEBI:30616"/>
    </ligand>
</feature>
<feature type="binding site" evidence="1">
    <location>
        <position position="28"/>
    </location>
    <ligand>
        <name>CTP</name>
        <dbReference type="ChEBI" id="CHEBI:37563"/>
    </ligand>
</feature>
<feature type="binding site" evidence="1">
    <location>
        <position position="31"/>
    </location>
    <ligand>
        <name>ATP</name>
        <dbReference type="ChEBI" id="CHEBI:30616"/>
    </ligand>
</feature>
<feature type="binding site" evidence="1">
    <location>
        <position position="31"/>
    </location>
    <ligand>
        <name>CTP</name>
        <dbReference type="ChEBI" id="CHEBI:37563"/>
    </ligand>
</feature>
<feature type="binding site" evidence="1">
    <location>
        <position position="41"/>
    </location>
    <ligand>
        <name>Mg(2+)</name>
        <dbReference type="ChEBI" id="CHEBI:18420"/>
    </ligand>
</feature>
<feature type="binding site" evidence="1">
    <location>
        <position position="43"/>
    </location>
    <ligand>
        <name>Mg(2+)</name>
        <dbReference type="ChEBI" id="CHEBI:18420"/>
    </ligand>
</feature>
<feature type="binding site" evidence="1">
    <location>
        <position position="112"/>
    </location>
    <ligand>
        <name>ATP</name>
        <dbReference type="ChEBI" id="CHEBI:30616"/>
    </ligand>
</feature>
<feature type="binding site" evidence="1">
    <location>
        <position position="112"/>
    </location>
    <ligand>
        <name>CTP</name>
        <dbReference type="ChEBI" id="CHEBI:37563"/>
    </ligand>
</feature>
<feature type="binding site" evidence="1">
    <location>
        <position position="155"/>
    </location>
    <ligand>
        <name>ATP</name>
        <dbReference type="ChEBI" id="CHEBI:30616"/>
    </ligand>
</feature>
<feature type="binding site" evidence="1">
    <location>
        <position position="155"/>
    </location>
    <ligand>
        <name>CTP</name>
        <dbReference type="ChEBI" id="CHEBI:37563"/>
    </ligand>
</feature>
<feature type="binding site" evidence="1">
    <location>
        <position position="158"/>
    </location>
    <ligand>
        <name>ATP</name>
        <dbReference type="ChEBI" id="CHEBI:30616"/>
    </ligand>
</feature>
<feature type="binding site" evidence="1">
    <location>
        <position position="158"/>
    </location>
    <ligand>
        <name>CTP</name>
        <dbReference type="ChEBI" id="CHEBI:37563"/>
    </ligand>
</feature>
<feature type="binding site" evidence="1">
    <location>
        <position position="161"/>
    </location>
    <ligand>
        <name>ATP</name>
        <dbReference type="ChEBI" id="CHEBI:30616"/>
    </ligand>
</feature>
<feature type="binding site" evidence="1">
    <location>
        <position position="161"/>
    </location>
    <ligand>
        <name>CTP</name>
        <dbReference type="ChEBI" id="CHEBI:37563"/>
    </ligand>
</feature>
<feature type="binding site" evidence="1">
    <location>
        <position position="164"/>
    </location>
    <ligand>
        <name>ATP</name>
        <dbReference type="ChEBI" id="CHEBI:30616"/>
    </ligand>
</feature>
<feature type="binding site" evidence="1">
    <location>
        <position position="164"/>
    </location>
    <ligand>
        <name>CTP</name>
        <dbReference type="ChEBI" id="CHEBI:37563"/>
    </ligand>
</feature>
<evidence type="ECO:0000255" key="1">
    <source>
        <dbReference type="HAMAP-Rule" id="MF_01263"/>
    </source>
</evidence>